<proteinExistence type="inferred from homology"/>
<sequence>MKTAAQIRELFLRFFEEKAHRRVPSSSLVPQNDPTLLFTNAGMNQFKDVFTGREKRDYSRATTAQKCVRAGGKHNDLENVGFTARHHTFFEMLGNFSFGDYFKKEAIAWAWELVTSERWLAISKERLAATVFAGEGTLPWDEEAYRLWEAQGVPPERIHKLGAKDNFWAMGDTGPCGPCSELHFFQGNDIPCAEEKAGRTCQGVACDCDRWLEIWNLVFMQFERGADGGLTPLPKPSIDTGAGLERMAAVVQGKRSNYDIDAFQSIIRAIEKLAGKRYGATDADDDVSMRVIADHARATTFLVGDGVLPANEGRGYVLRRIMRRAIRHGKRLGLERPFLADVCEAVMEEMGGAYPETRENRAFIVKVAGQEEESFRRTLDKGLAILETEMRKAIPPETHLGKPATPPPSAPRPVIDGKLAFQLYDTFGFPLDLTRVIAAERGFDVDEQGFDRNMAEQRARSEWKGSGEQAVGDLHKQIASELGETRFLGYEAPTARAEVKALLANGARAAKAARGDKVEVVTAATPFYGESGGQVGDQGSIAAPGGRVRVEDTRRPVPGLVTHVGVVEEGELAVGDLVELAVDDRRRDLIRANHSATHLLQLALRETLGDHVKQAGSIVAPDYLRFDFSHFQPLSEEELNAIERRVNELVRENAETETAVLKLEDARQSGAMMIFGEKYGDVVRVVRLGPSKELCGGTHVRRTGDIAFFKIGSEESIAAGVRRIVAYTGPQAIELSQREADELRRAAALFKAGAFEVAQKIEQTQKRVKDLERALDEAKGKIASAQSGDLAAQARDVKGAKVLAVRVQGDGKSLRELADKLRDRLGTGVVALGAEQDGKAILLVAVTKDLTARLKAGELVKEAAKLVGGSGGGKPDLAQAGGSDPAGLEKALAKVQELAVAALG</sequence>
<protein>
    <recommendedName>
        <fullName evidence="1">Alanine--tRNA ligase</fullName>
        <ecNumber evidence="1">6.1.1.7</ecNumber>
    </recommendedName>
    <alternativeName>
        <fullName evidence="1">Alanyl-tRNA synthetase</fullName>
        <shortName evidence="1">AlaRS</shortName>
    </alternativeName>
</protein>
<accession>A7HH87</accession>
<organism>
    <name type="scientific">Anaeromyxobacter sp. (strain Fw109-5)</name>
    <dbReference type="NCBI Taxonomy" id="404589"/>
    <lineage>
        <taxon>Bacteria</taxon>
        <taxon>Pseudomonadati</taxon>
        <taxon>Myxococcota</taxon>
        <taxon>Myxococcia</taxon>
        <taxon>Myxococcales</taxon>
        <taxon>Cystobacterineae</taxon>
        <taxon>Anaeromyxobacteraceae</taxon>
        <taxon>Anaeromyxobacter</taxon>
    </lineage>
</organism>
<reference key="1">
    <citation type="journal article" date="2015" name="Genome Announc.">
        <title>Complete genome sequence of Anaeromyxobacter sp. Fw109-5, an anaerobic, metal-reducing bacterium isolated from a contaminated subsurface environment.</title>
        <authorList>
            <person name="Hwang C."/>
            <person name="Copeland A."/>
            <person name="Lucas S."/>
            <person name="Lapidus A."/>
            <person name="Barry K."/>
            <person name="Glavina Del Rio T."/>
            <person name="Dalin E."/>
            <person name="Tice H."/>
            <person name="Pitluck S."/>
            <person name="Sims D."/>
            <person name="Brettin T."/>
            <person name="Bruce D.C."/>
            <person name="Detter J.C."/>
            <person name="Han C.S."/>
            <person name="Schmutz J."/>
            <person name="Larimer F.W."/>
            <person name="Land M.L."/>
            <person name="Hauser L.J."/>
            <person name="Kyrpides N."/>
            <person name="Lykidis A."/>
            <person name="Richardson P."/>
            <person name="Belieav A."/>
            <person name="Sanford R.A."/>
            <person name="Loeffler F.E."/>
            <person name="Fields M.W."/>
        </authorList>
    </citation>
    <scope>NUCLEOTIDE SEQUENCE [LARGE SCALE GENOMIC DNA]</scope>
    <source>
        <strain>Fw109-5</strain>
    </source>
</reference>
<feature type="chain" id="PRO_0000347489" description="Alanine--tRNA ligase">
    <location>
        <begin position="1"/>
        <end position="904"/>
    </location>
</feature>
<feature type="binding site" evidence="1">
    <location>
        <position position="594"/>
    </location>
    <ligand>
        <name>Zn(2+)</name>
        <dbReference type="ChEBI" id="CHEBI:29105"/>
    </ligand>
</feature>
<feature type="binding site" evidence="1">
    <location>
        <position position="598"/>
    </location>
    <ligand>
        <name>Zn(2+)</name>
        <dbReference type="ChEBI" id="CHEBI:29105"/>
    </ligand>
</feature>
<feature type="binding site" evidence="1">
    <location>
        <position position="695"/>
    </location>
    <ligand>
        <name>Zn(2+)</name>
        <dbReference type="ChEBI" id="CHEBI:29105"/>
    </ligand>
</feature>
<feature type="binding site" evidence="1">
    <location>
        <position position="699"/>
    </location>
    <ligand>
        <name>Zn(2+)</name>
        <dbReference type="ChEBI" id="CHEBI:29105"/>
    </ligand>
</feature>
<gene>
    <name evidence="1" type="primary">alaS</name>
    <name type="ordered locus">Anae109_3904</name>
</gene>
<name>SYA_ANADF</name>
<evidence type="ECO:0000255" key="1">
    <source>
        <dbReference type="HAMAP-Rule" id="MF_00036"/>
    </source>
</evidence>
<comment type="function">
    <text evidence="1">Catalyzes the attachment of alanine to tRNA(Ala) in a two-step reaction: alanine is first activated by ATP to form Ala-AMP and then transferred to the acceptor end of tRNA(Ala). Also edits incorrectly charged Ser-tRNA(Ala) and Gly-tRNA(Ala) via its editing domain.</text>
</comment>
<comment type="catalytic activity">
    <reaction evidence="1">
        <text>tRNA(Ala) + L-alanine + ATP = L-alanyl-tRNA(Ala) + AMP + diphosphate</text>
        <dbReference type="Rhea" id="RHEA:12540"/>
        <dbReference type="Rhea" id="RHEA-COMP:9657"/>
        <dbReference type="Rhea" id="RHEA-COMP:9923"/>
        <dbReference type="ChEBI" id="CHEBI:30616"/>
        <dbReference type="ChEBI" id="CHEBI:33019"/>
        <dbReference type="ChEBI" id="CHEBI:57972"/>
        <dbReference type="ChEBI" id="CHEBI:78442"/>
        <dbReference type="ChEBI" id="CHEBI:78497"/>
        <dbReference type="ChEBI" id="CHEBI:456215"/>
        <dbReference type="EC" id="6.1.1.7"/>
    </reaction>
</comment>
<comment type="cofactor">
    <cofactor evidence="1">
        <name>Zn(2+)</name>
        <dbReference type="ChEBI" id="CHEBI:29105"/>
    </cofactor>
    <text evidence="1">Binds 1 zinc ion per subunit.</text>
</comment>
<comment type="subcellular location">
    <subcellularLocation>
        <location evidence="1">Cytoplasm</location>
    </subcellularLocation>
</comment>
<comment type="domain">
    <text evidence="1">Consists of three domains; the N-terminal catalytic domain, the editing domain and the C-terminal C-Ala domain. The editing domain removes incorrectly charged amino acids, while the C-Ala domain, along with tRNA(Ala), serves as a bridge to cooperatively bring together the editing and aminoacylation centers thus stimulating deacylation of misacylated tRNAs.</text>
</comment>
<comment type="similarity">
    <text evidence="1">Belongs to the class-II aminoacyl-tRNA synthetase family.</text>
</comment>
<keyword id="KW-0030">Aminoacyl-tRNA synthetase</keyword>
<keyword id="KW-0067">ATP-binding</keyword>
<keyword id="KW-0963">Cytoplasm</keyword>
<keyword id="KW-0436">Ligase</keyword>
<keyword id="KW-0479">Metal-binding</keyword>
<keyword id="KW-0547">Nucleotide-binding</keyword>
<keyword id="KW-0648">Protein biosynthesis</keyword>
<keyword id="KW-1185">Reference proteome</keyword>
<keyword id="KW-0694">RNA-binding</keyword>
<keyword id="KW-0820">tRNA-binding</keyword>
<keyword id="KW-0862">Zinc</keyword>
<dbReference type="EC" id="6.1.1.7" evidence="1"/>
<dbReference type="EMBL" id="CP000769">
    <property type="protein sequence ID" value="ABS28083.1"/>
    <property type="molecule type" value="Genomic_DNA"/>
</dbReference>
<dbReference type="RefSeq" id="WP_012098717.1">
    <property type="nucleotide sequence ID" value="NC_009675.1"/>
</dbReference>
<dbReference type="SMR" id="A7HH87"/>
<dbReference type="STRING" id="404589.Anae109_3904"/>
<dbReference type="KEGG" id="afw:Anae109_3904"/>
<dbReference type="eggNOG" id="COG0013">
    <property type="taxonomic scope" value="Bacteria"/>
</dbReference>
<dbReference type="HOGENOM" id="CLU_004485_1_1_7"/>
<dbReference type="OrthoDB" id="9803884at2"/>
<dbReference type="Proteomes" id="UP000006382">
    <property type="component" value="Chromosome"/>
</dbReference>
<dbReference type="GO" id="GO:0005829">
    <property type="term" value="C:cytosol"/>
    <property type="evidence" value="ECO:0007669"/>
    <property type="project" value="TreeGrafter"/>
</dbReference>
<dbReference type="GO" id="GO:0004813">
    <property type="term" value="F:alanine-tRNA ligase activity"/>
    <property type="evidence" value="ECO:0007669"/>
    <property type="project" value="UniProtKB-UniRule"/>
</dbReference>
<dbReference type="GO" id="GO:0002161">
    <property type="term" value="F:aminoacyl-tRNA deacylase activity"/>
    <property type="evidence" value="ECO:0007669"/>
    <property type="project" value="TreeGrafter"/>
</dbReference>
<dbReference type="GO" id="GO:0005524">
    <property type="term" value="F:ATP binding"/>
    <property type="evidence" value="ECO:0007669"/>
    <property type="project" value="UniProtKB-UniRule"/>
</dbReference>
<dbReference type="GO" id="GO:0000049">
    <property type="term" value="F:tRNA binding"/>
    <property type="evidence" value="ECO:0007669"/>
    <property type="project" value="UniProtKB-KW"/>
</dbReference>
<dbReference type="GO" id="GO:0008270">
    <property type="term" value="F:zinc ion binding"/>
    <property type="evidence" value="ECO:0007669"/>
    <property type="project" value="UniProtKB-UniRule"/>
</dbReference>
<dbReference type="GO" id="GO:0006419">
    <property type="term" value="P:alanyl-tRNA aminoacylation"/>
    <property type="evidence" value="ECO:0007669"/>
    <property type="project" value="UniProtKB-UniRule"/>
</dbReference>
<dbReference type="GO" id="GO:0045892">
    <property type="term" value="P:negative regulation of DNA-templated transcription"/>
    <property type="evidence" value="ECO:0007669"/>
    <property type="project" value="TreeGrafter"/>
</dbReference>
<dbReference type="CDD" id="cd00673">
    <property type="entry name" value="AlaRS_core"/>
    <property type="match status" value="1"/>
</dbReference>
<dbReference type="FunFam" id="3.10.310.40:FF:000001">
    <property type="entry name" value="Alanine--tRNA ligase"/>
    <property type="match status" value="1"/>
</dbReference>
<dbReference type="FunFam" id="3.30.54.20:FF:000001">
    <property type="entry name" value="Alanine--tRNA ligase"/>
    <property type="match status" value="1"/>
</dbReference>
<dbReference type="FunFam" id="3.30.930.10:FF:000004">
    <property type="entry name" value="Alanine--tRNA ligase"/>
    <property type="match status" value="1"/>
</dbReference>
<dbReference type="FunFam" id="3.30.980.10:FF:000004">
    <property type="entry name" value="Alanine--tRNA ligase, cytoplasmic"/>
    <property type="match status" value="1"/>
</dbReference>
<dbReference type="Gene3D" id="2.40.30.130">
    <property type="match status" value="1"/>
</dbReference>
<dbReference type="Gene3D" id="3.10.310.40">
    <property type="match status" value="1"/>
</dbReference>
<dbReference type="Gene3D" id="3.30.54.20">
    <property type="match status" value="1"/>
</dbReference>
<dbReference type="Gene3D" id="6.10.250.550">
    <property type="match status" value="1"/>
</dbReference>
<dbReference type="Gene3D" id="3.30.930.10">
    <property type="entry name" value="Bira Bifunctional Protein, Domain 2"/>
    <property type="match status" value="1"/>
</dbReference>
<dbReference type="Gene3D" id="3.30.980.10">
    <property type="entry name" value="Threonyl-trna Synthetase, Chain A, domain 2"/>
    <property type="match status" value="1"/>
</dbReference>
<dbReference type="HAMAP" id="MF_00036_B">
    <property type="entry name" value="Ala_tRNA_synth_B"/>
    <property type="match status" value="1"/>
</dbReference>
<dbReference type="InterPro" id="IPR045864">
    <property type="entry name" value="aa-tRNA-synth_II/BPL/LPL"/>
</dbReference>
<dbReference type="InterPro" id="IPR002318">
    <property type="entry name" value="Ala-tRNA-lgiase_IIc"/>
</dbReference>
<dbReference type="InterPro" id="IPR018162">
    <property type="entry name" value="Ala-tRNA-ligase_IIc_anticod-bd"/>
</dbReference>
<dbReference type="InterPro" id="IPR018165">
    <property type="entry name" value="Ala-tRNA-synth_IIc_core"/>
</dbReference>
<dbReference type="InterPro" id="IPR018164">
    <property type="entry name" value="Ala-tRNA-synth_IIc_N"/>
</dbReference>
<dbReference type="InterPro" id="IPR050058">
    <property type="entry name" value="Ala-tRNA_ligase"/>
</dbReference>
<dbReference type="InterPro" id="IPR023033">
    <property type="entry name" value="Ala_tRNA_ligase_euk/bac"/>
</dbReference>
<dbReference type="InterPro" id="IPR003156">
    <property type="entry name" value="DHHA1_dom"/>
</dbReference>
<dbReference type="InterPro" id="IPR018163">
    <property type="entry name" value="Thr/Ala-tRNA-synth_IIc_edit"/>
</dbReference>
<dbReference type="InterPro" id="IPR009000">
    <property type="entry name" value="Transl_B-barrel_sf"/>
</dbReference>
<dbReference type="InterPro" id="IPR012947">
    <property type="entry name" value="tRNA_SAD"/>
</dbReference>
<dbReference type="NCBIfam" id="TIGR00344">
    <property type="entry name" value="alaS"/>
    <property type="match status" value="1"/>
</dbReference>
<dbReference type="PANTHER" id="PTHR11777:SF9">
    <property type="entry name" value="ALANINE--TRNA LIGASE, CYTOPLASMIC"/>
    <property type="match status" value="1"/>
</dbReference>
<dbReference type="PANTHER" id="PTHR11777">
    <property type="entry name" value="ALANYL-TRNA SYNTHETASE"/>
    <property type="match status" value="1"/>
</dbReference>
<dbReference type="Pfam" id="PF02272">
    <property type="entry name" value="DHHA1"/>
    <property type="match status" value="1"/>
</dbReference>
<dbReference type="Pfam" id="PF01411">
    <property type="entry name" value="tRNA-synt_2c"/>
    <property type="match status" value="1"/>
</dbReference>
<dbReference type="Pfam" id="PF07973">
    <property type="entry name" value="tRNA_SAD"/>
    <property type="match status" value="1"/>
</dbReference>
<dbReference type="PRINTS" id="PR00980">
    <property type="entry name" value="TRNASYNTHALA"/>
</dbReference>
<dbReference type="SMART" id="SM00863">
    <property type="entry name" value="tRNA_SAD"/>
    <property type="match status" value="1"/>
</dbReference>
<dbReference type="SUPFAM" id="SSF55681">
    <property type="entry name" value="Class II aaRS and biotin synthetases"/>
    <property type="match status" value="1"/>
</dbReference>
<dbReference type="SUPFAM" id="SSF101353">
    <property type="entry name" value="Putative anticodon-binding domain of alanyl-tRNA synthetase (AlaRS)"/>
    <property type="match status" value="1"/>
</dbReference>
<dbReference type="SUPFAM" id="SSF55186">
    <property type="entry name" value="ThrRS/AlaRS common domain"/>
    <property type="match status" value="1"/>
</dbReference>
<dbReference type="SUPFAM" id="SSF50447">
    <property type="entry name" value="Translation proteins"/>
    <property type="match status" value="1"/>
</dbReference>
<dbReference type="PROSITE" id="PS50860">
    <property type="entry name" value="AA_TRNA_LIGASE_II_ALA"/>
    <property type="match status" value="1"/>
</dbReference>